<evidence type="ECO:0000250" key="1"/>
<evidence type="ECO:0000305" key="2"/>
<feature type="chain" id="PRO_0000419512" description="Short-chain dehydrogenase reductase 3b">
    <location>
        <begin position="1"/>
        <end position="257"/>
    </location>
</feature>
<feature type="active site" description="Proton acceptor" evidence="1">
    <location>
        <position position="157"/>
    </location>
</feature>
<feature type="binding site" evidence="1">
    <location>
        <begin position="12"/>
        <end position="36"/>
    </location>
    <ligand>
        <name>NAD(+)</name>
        <dbReference type="ChEBI" id="CHEBI:57540"/>
    </ligand>
</feature>
<feature type="binding site" evidence="1">
    <location>
        <position position="144"/>
    </location>
    <ligand>
        <name>substrate</name>
    </ligand>
</feature>
<dbReference type="EC" id="1.1.1.-"/>
<dbReference type="EMBL" id="AC004411">
    <property type="protein sequence ID" value="AAC34234.2"/>
    <property type="molecule type" value="Genomic_DNA"/>
</dbReference>
<dbReference type="EMBL" id="CP002685">
    <property type="protein sequence ID" value="AEC10806.1"/>
    <property type="molecule type" value="Genomic_DNA"/>
</dbReference>
<dbReference type="EMBL" id="AF370319">
    <property type="protein sequence ID" value="AAK44134.1"/>
    <property type="molecule type" value="mRNA"/>
</dbReference>
<dbReference type="EMBL" id="AY063106">
    <property type="protein sequence ID" value="AAL34280.1"/>
    <property type="molecule type" value="mRNA"/>
</dbReference>
<dbReference type="PIR" id="T02174">
    <property type="entry name" value="T02174"/>
</dbReference>
<dbReference type="RefSeq" id="NP_566097.1">
    <property type="nucleotide sequence ID" value="NM_130282.2"/>
</dbReference>
<dbReference type="SMR" id="Q94K41"/>
<dbReference type="FunCoup" id="Q94K41">
    <property type="interactions" value="217"/>
</dbReference>
<dbReference type="STRING" id="3702.Q94K41"/>
<dbReference type="PaxDb" id="3702-AT2G47140.1"/>
<dbReference type="ProteomicsDB" id="232954"/>
<dbReference type="EnsemblPlants" id="AT2G47140.1">
    <property type="protein sequence ID" value="AT2G47140.1"/>
    <property type="gene ID" value="AT2G47140"/>
</dbReference>
<dbReference type="GeneID" id="819327"/>
<dbReference type="Gramene" id="AT2G47140.1">
    <property type="protein sequence ID" value="AT2G47140.1"/>
    <property type="gene ID" value="AT2G47140"/>
</dbReference>
<dbReference type="KEGG" id="ath:AT2G47140"/>
<dbReference type="Araport" id="AT2G47140"/>
<dbReference type="TAIR" id="AT2G47140">
    <property type="gene designation" value="SDR5"/>
</dbReference>
<dbReference type="eggNOG" id="KOG0725">
    <property type="taxonomic scope" value="Eukaryota"/>
</dbReference>
<dbReference type="HOGENOM" id="CLU_010194_1_0_1"/>
<dbReference type="InParanoid" id="Q94K41"/>
<dbReference type="OMA" id="NTDMNPA"/>
<dbReference type="PhylomeDB" id="Q94K41"/>
<dbReference type="BioCyc" id="ARA:AT2G47140-MONOMER"/>
<dbReference type="PRO" id="PR:Q94K41"/>
<dbReference type="Proteomes" id="UP000006548">
    <property type="component" value="Chromosome 2"/>
</dbReference>
<dbReference type="ExpressionAtlas" id="Q94K41">
    <property type="expression patterns" value="baseline and differential"/>
</dbReference>
<dbReference type="GO" id="GO:0016491">
    <property type="term" value="F:oxidoreductase activity"/>
    <property type="evidence" value="ECO:0007669"/>
    <property type="project" value="UniProtKB-KW"/>
</dbReference>
<dbReference type="FunFam" id="3.40.50.720:FF:000084">
    <property type="entry name" value="Short-chain dehydrogenase reductase"/>
    <property type="match status" value="1"/>
</dbReference>
<dbReference type="Gene3D" id="3.40.50.720">
    <property type="entry name" value="NAD(P)-binding Rossmann-like Domain"/>
    <property type="match status" value="1"/>
</dbReference>
<dbReference type="InterPro" id="IPR036291">
    <property type="entry name" value="NAD(P)-bd_dom_sf"/>
</dbReference>
<dbReference type="InterPro" id="IPR002347">
    <property type="entry name" value="SDR_fam"/>
</dbReference>
<dbReference type="PANTHER" id="PTHR42820">
    <property type="entry name" value="SHORT-CHAIN DEHYDROGENASE REDUCTASE"/>
    <property type="match status" value="1"/>
</dbReference>
<dbReference type="PANTHER" id="PTHR42820:SF16">
    <property type="entry name" value="SHORT-CHAIN DEHYDROGENASE REDUCTASE 3B"/>
    <property type="match status" value="1"/>
</dbReference>
<dbReference type="Pfam" id="PF13561">
    <property type="entry name" value="adh_short_C2"/>
    <property type="match status" value="1"/>
</dbReference>
<dbReference type="PRINTS" id="PR00081">
    <property type="entry name" value="GDHRDH"/>
</dbReference>
<dbReference type="PRINTS" id="PR00080">
    <property type="entry name" value="SDRFAMILY"/>
</dbReference>
<dbReference type="SUPFAM" id="SSF51735">
    <property type="entry name" value="NAD(P)-binding Rossmann-fold domains"/>
    <property type="match status" value="1"/>
</dbReference>
<gene>
    <name type="primary">SDR3b</name>
    <name type="synonym">SDR3</name>
    <name type="synonym">SDR5</name>
    <name type="ordered locus">At2g47140</name>
    <name type="ORF">F14M4</name>
</gene>
<accession>Q94K41</accession>
<accession>O80712</accession>
<keyword id="KW-0560">Oxidoreductase</keyword>
<keyword id="KW-1185">Reference proteome</keyword>
<sequence>MSGKRLDGKIVIITGGASGIGAESVRLFTEHGARVVIVDVQDELGQNVAVSIGEDKASYYHCDVTNETEVENAVKFTVEKYGKLDVLFSNAGVIEPFVSILDLNLNELDRTIAINLRGTAAFIKHAARAMVEKGIRGSIVCTTSVAAEIAGTAPHGYTTSKHGLLGLIKSASGGLGKYGIRVNGVAPFGVATPLVCNGFKMEPNVVEQNTSASANLKGIVLKARHVAEAALFLASDESAYVSGQNLAVDGGYSVVKP</sequence>
<reference key="1">
    <citation type="journal article" date="1999" name="Nature">
        <title>Sequence and analysis of chromosome 2 of the plant Arabidopsis thaliana.</title>
        <authorList>
            <person name="Lin X."/>
            <person name="Kaul S."/>
            <person name="Rounsley S.D."/>
            <person name="Shea T.P."/>
            <person name="Benito M.-I."/>
            <person name="Town C.D."/>
            <person name="Fujii C.Y."/>
            <person name="Mason T.M."/>
            <person name="Bowman C.L."/>
            <person name="Barnstead M.E."/>
            <person name="Feldblyum T.V."/>
            <person name="Buell C.R."/>
            <person name="Ketchum K.A."/>
            <person name="Lee J.J."/>
            <person name="Ronning C.M."/>
            <person name="Koo H.L."/>
            <person name="Moffat K.S."/>
            <person name="Cronin L.A."/>
            <person name="Shen M."/>
            <person name="Pai G."/>
            <person name="Van Aken S."/>
            <person name="Umayam L."/>
            <person name="Tallon L.J."/>
            <person name="Gill J.E."/>
            <person name="Adams M.D."/>
            <person name="Carrera A.J."/>
            <person name="Creasy T.H."/>
            <person name="Goodman H.M."/>
            <person name="Somerville C.R."/>
            <person name="Copenhaver G.P."/>
            <person name="Preuss D."/>
            <person name="Nierman W.C."/>
            <person name="White O."/>
            <person name="Eisen J.A."/>
            <person name="Salzberg S.L."/>
            <person name="Fraser C.M."/>
            <person name="Venter J.C."/>
        </authorList>
    </citation>
    <scope>NUCLEOTIDE SEQUENCE [LARGE SCALE GENOMIC DNA]</scope>
    <source>
        <strain>cv. Columbia</strain>
    </source>
</reference>
<reference key="2">
    <citation type="journal article" date="2017" name="Plant J.">
        <title>Araport11: a complete reannotation of the Arabidopsis thaliana reference genome.</title>
        <authorList>
            <person name="Cheng C.Y."/>
            <person name="Krishnakumar V."/>
            <person name="Chan A.P."/>
            <person name="Thibaud-Nissen F."/>
            <person name="Schobel S."/>
            <person name="Town C.D."/>
        </authorList>
    </citation>
    <scope>GENOME REANNOTATION</scope>
    <source>
        <strain>cv. Columbia</strain>
    </source>
</reference>
<reference key="3">
    <citation type="journal article" date="2003" name="Science">
        <title>Empirical analysis of transcriptional activity in the Arabidopsis genome.</title>
        <authorList>
            <person name="Yamada K."/>
            <person name="Lim J."/>
            <person name="Dale J.M."/>
            <person name="Chen H."/>
            <person name="Shinn P."/>
            <person name="Palm C.J."/>
            <person name="Southwick A.M."/>
            <person name="Wu H.C."/>
            <person name="Kim C.J."/>
            <person name="Nguyen M."/>
            <person name="Pham P.K."/>
            <person name="Cheuk R.F."/>
            <person name="Karlin-Newmann G."/>
            <person name="Liu S.X."/>
            <person name="Lam B."/>
            <person name="Sakano H."/>
            <person name="Wu T."/>
            <person name="Yu G."/>
            <person name="Miranda M."/>
            <person name="Quach H.L."/>
            <person name="Tripp M."/>
            <person name="Chang C.H."/>
            <person name="Lee J.M."/>
            <person name="Toriumi M.J."/>
            <person name="Chan M.M."/>
            <person name="Tang C.C."/>
            <person name="Onodera C.S."/>
            <person name="Deng J.M."/>
            <person name="Akiyama K."/>
            <person name="Ansari Y."/>
            <person name="Arakawa T."/>
            <person name="Banh J."/>
            <person name="Banno F."/>
            <person name="Bowser L."/>
            <person name="Brooks S.Y."/>
            <person name="Carninci P."/>
            <person name="Chao Q."/>
            <person name="Choy N."/>
            <person name="Enju A."/>
            <person name="Goldsmith A.D."/>
            <person name="Gurjal M."/>
            <person name="Hansen N.F."/>
            <person name="Hayashizaki Y."/>
            <person name="Johnson-Hopson C."/>
            <person name="Hsuan V.W."/>
            <person name="Iida K."/>
            <person name="Karnes M."/>
            <person name="Khan S."/>
            <person name="Koesema E."/>
            <person name="Ishida J."/>
            <person name="Jiang P.X."/>
            <person name="Jones T."/>
            <person name="Kawai J."/>
            <person name="Kamiya A."/>
            <person name="Meyers C."/>
            <person name="Nakajima M."/>
            <person name="Narusaka M."/>
            <person name="Seki M."/>
            <person name="Sakurai T."/>
            <person name="Satou M."/>
            <person name="Tamse R."/>
            <person name="Vaysberg M."/>
            <person name="Wallender E.K."/>
            <person name="Wong C."/>
            <person name="Yamamura Y."/>
            <person name="Yuan S."/>
            <person name="Shinozaki K."/>
            <person name="Davis R.W."/>
            <person name="Theologis A."/>
            <person name="Ecker J.R."/>
        </authorList>
    </citation>
    <scope>NUCLEOTIDE SEQUENCE [LARGE SCALE MRNA]</scope>
    <source>
        <strain>cv. Columbia</strain>
    </source>
</reference>
<name>SDR3B_ARATH</name>
<proteinExistence type="evidence at transcript level"/>
<organism>
    <name type="scientific">Arabidopsis thaliana</name>
    <name type="common">Mouse-ear cress</name>
    <dbReference type="NCBI Taxonomy" id="3702"/>
    <lineage>
        <taxon>Eukaryota</taxon>
        <taxon>Viridiplantae</taxon>
        <taxon>Streptophyta</taxon>
        <taxon>Embryophyta</taxon>
        <taxon>Tracheophyta</taxon>
        <taxon>Spermatophyta</taxon>
        <taxon>Magnoliopsida</taxon>
        <taxon>eudicotyledons</taxon>
        <taxon>Gunneridae</taxon>
        <taxon>Pentapetalae</taxon>
        <taxon>rosids</taxon>
        <taxon>malvids</taxon>
        <taxon>Brassicales</taxon>
        <taxon>Brassicaceae</taxon>
        <taxon>Camelineae</taxon>
        <taxon>Arabidopsis</taxon>
    </lineage>
</organism>
<comment type="similarity">
    <text evidence="2">Belongs to the short-chain dehydrogenases/reductases (SDR) family.</text>
</comment>
<protein>
    <recommendedName>
        <fullName>Short-chain dehydrogenase reductase 3b</fullName>
        <shortName>AtSDR3b</shortName>
        <ecNumber>1.1.1.-</ecNumber>
    </recommendedName>
</protein>